<reference key="1">
    <citation type="journal article" date="1999" name="Nature">
        <title>Sequence and analysis of chromosome 2 of the plant Arabidopsis thaliana.</title>
        <authorList>
            <person name="Lin X."/>
            <person name="Kaul S."/>
            <person name="Rounsley S.D."/>
            <person name="Shea T.P."/>
            <person name="Benito M.-I."/>
            <person name="Town C.D."/>
            <person name="Fujii C.Y."/>
            <person name="Mason T.M."/>
            <person name="Bowman C.L."/>
            <person name="Barnstead M.E."/>
            <person name="Feldblyum T.V."/>
            <person name="Buell C.R."/>
            <person name="Ketchum K.A."/>
            <person name="Lee J.J."/>
            <person name="Ronning C.M."/>
            <person name="Koo H.L."/>
            <person name="Moffat K.S."/>
            <person name="Cronin L.A."/>
            <person name="Shen M."/>
            <person name="Pai G."/>
            <person name="Van Aken S."/>
            <person name="Umayam L."/>
            <person name="Tallon L.J."/>
            <person name="Gill J.E."/>
            <person name="Adams M.D."/>
            <person name="Carrera A.J."/>
            <person name="Creasy T.H."/>
            <person name="Goodman H.M."/>
            <person name="Somerville C.R."/>
            <person name="Copenhaver G.P."/>
            <person name="Preuss D."/>
            <person name="Nierman W.C."/>
            <person name="White O."/>
            <person name="Eisen J.A."/>
            <person name="Salzberg S.L."/>
            <person name="Fraser C.M."/>
            <person name="Venter J.C."/>
        </authorList>
    </citation>
    <scope>NUCLEOTIDE SEQUENCE [LARGE SCALE GENOMIC DNA]</scope>
    <source>
        <strain>cv. Columbia</strain>
    </source>
</reference>
<reference key="2">
    <citation type="journal article" date="2017" name="Plant J.">
        <title>Araport11: a complete reannotation of the Arabidopsis thaliana reference genome.</title>
        <authorList>
            <person name="Cheng C.Y."/>
            <person name="Krishnakumar V."/>
            <person name="Chan A.P."/>
            <person name="Thibaud-Nissen F."/>
            <person name="Schobel S."/>
            <person name="Town C.D."/>
        </authorList>
    </citation>
    <scope>GENOME REANNOTATION</scope>
    <source>
        <strain>cv. Columbia</strain>
    </source>
</reference>
<reference key="3">
    <citation type="journal article" date="2003" name="Science">
        <title>Empirical analysis of transcriptional activity in the Arabidopsis genome.</title>
        <authorList>
            <person name="Yamada K."/>
            <person name="Lim J."/>
            <person name="Dale J.M."/>
            <person name="Chen H."/>
            <person name="Shinn P."/>
            <person name="Palm C.J."/>
            <person name="Southwick A.M."/>
            <person name="Wu H.C."/>
            <person name="Kim C.J."/>
            <person name="Nguyen M."/>
            <person name="Pham P.K."/>
            <person name="Cheuk R.F."/>
            <person name="Karlin-Newmann G."/>
            <person name="Liu S.X."/>
            <person name="Lam B."/>
            <person name="Sakano H."/>
            <person name="Wu T."/>
            <person name="Yu G."/>
            <person name="Miranda M."/>
            <person name="Quach H.L."/>
            <person name="Tripp M."/>
            <person name="Chang C.H."/>
            <person name="Lee J.M."/>
            <person name="Toriumi M.J."/>
            <person name="Chan M.M."/>
            <person name="Tang C.C."/>
            <person name="Onodera C.S."/>
            <person name="Deng J.M."/>
            <person name="Akiyama K."/>
            <person name="Ansari Y."/>
            <person name="Arakawa T."/>
            <person name="Banh J."/>
            <person name="Banno F."/>
            <person name="Bowser L."/>
            <person name="Brooks S.Y."/>
            <person name="Carninci P."/>
            <person name="Chao Q."/>
            <person name="Choy N."/>
            <person name="Enju A."/>
            <person name="Goldsmith A.D."/>
            <person name="Gurjal M."/>
            <person name="Hansen N.F."/>
            <person name="Hayashizaki Y."/>
            <person name="Johnson-Hopson C."/>
            <person name="Hsuan V.W."/>
            <person name="Iida K."/>
            <person name="Karnes M."/>
            <person name="Khan S."/>
            <person name="Koesema E."/>
            <person name="Ishida J."/>
            <person name="Jiang P.X."/>
            <person name="Jones T."/>
            <person name="Kawai J."/>
            <person name="Kamiya A."/>
            <person name="Meyers C."/>
            <person name="Nakajima M."/>
            <person name="Narusaka M."/>
            <person name="Seki M."/>
            <person name="Sakurai T."/>
            <person name="Satou M."/>
            <person name="Tamse R."/>
            <person name="Vaysberg M."/>
            <person name="Wallender E.K."/>
            <person name="Wong C."/>
            <person name="Yamamura Y."/>
            <person name="Yuan S."/>
            <person name="Shinozaki K."/>
            <person name="Davis R.W."/>
            <person name="Theologis A."/>
            <person name="Ecker J.R."/>
        </authorList>
    </citation>
    <scope>NUCLEOTIDE SEQUENCE [LARGE SCALE MRNA]</scope>
    <source>
        <strain>cv. Columbia</strain>
    </source>
</reference>
<reference key="4">
    <citation type="journal article" date="2005" name="Plant Physiol.">
        <title>Phylogenetic analyses identify 10 classes of the protein disulfide isomerase family in plants, including single-domain protein disulfide isomerase-related proteins.</title>
        <authorList>
            <person name="Houston N.L."/>
            <person name="Fan C."/>
            <person name="Xiang J.Q."/>
            <person name="Schulze J.M."/>
            <person name="Jung R."/>
            <person name="Boston R.S."/>
        </authorList>
    </citation>
    <scope>GENE FAMILY</scope>
    <scope>NOMENCLATURE</scope>
</reference>
<reference key="5">
    <citation type="journal article" date="2008" name="Mol. Genet. Genomics">
        <title>Endoplasmic reticulum stress activates the expression of a sub-group of protein disulfide isomerase genes and AtbZIP60 modulates the response in Arabidopsis thaliana.</title>
        <authorList>
            <person name="Lu D.-P."/>
            <person name="Christopher D.A."/>
        </authorList>
    </citation>
    <scope>TISSUE SPECIFICITY</scope>
    <scope>INDUCTION</scope>
</reference>
<reference key="6">
    <citation type="journal article" date="2010" name="BMC Plant Biol.">
        <title>The protein disulfide isomerase gene family in bread wheat (T. aestivum L.).</title>
        <authorList>
            <person name="d'Aloisio E."/>
            <person name="Paolacci A.R."/>
            <person name="Dhanapal A.P."/>
            <person name="Tanzarella O.A."/>
            <person name="Porceddu E."/>
            <person name="Ciaffi M."/>
        </authorList>
    </citation>
    <scope>GENE FAMILY</scope>
    <scope>NOMENCLATURE</scope>
</reference>
<comment type="function">
    <text evidence="1">Acts as a protein-folding catalyst that interacts with nascent polypeptides to catalyze the formation, isomerization, and reduction or oxidation of disulfide bonds.</text>
</comment>
<comment type="catalytic activity">
    <reaction>
        <text>Catalyzes the rearrangement of -S-S- bonds in proteins.</text>
        <dbReference type="EC" id="5.3.4.1"/>
    </reaction>
</comment>
<comment type="subcellular location">
    <subcellularLocation>
        <location evidence="7">Endoplasmic reticulum lumen</location>
    </subcellularLocation>
</comment>
<comment type="tissue specificity">
    <text evidence="6">Widely expressed.</text>
</comment>
<comment type="induction">
    <text evidence="6">By chemically-induced ER stress response.</text>
</comment>
<comment type="similarity">
    <text evidence="7">Belongs to the protein disulfide isomerase family.</text>
</comment>
<feature type="signal peptide" evidence="2">
    <location>
        <begin position="1"/>
        <end position="24"/>
    </location>
</feature>
<feature type="chain" id="PRO_0000400023" description="Protein disulfide-isomerase 2-3">
    <location>
        <begin position="25"/>
        <end position="440"/>
    </location>
</feature>
<feature type="domain" description="Thioredoxin 1" evidence="3">
    <location>
        <begin position="25"/>
        <end position="136"/>
    </location>
</feature>
<feature type="domain" description="Thioredoxin 2" evidence="3">
    <location>
        <begin position="154"/>
        <end position="269"/>
    </location>
</feature>
<feature type="region of interest" description="Disordered" evidence="5">
    <location>
        <begin position="143"/>
        <end position="163"/>
    </location>
</feature>
<feature type="short sequence motif" description="Prevents secretion from ER" evidence="4">
    <location>
        <begin position="437"/>
        <end position="440"/>
    </location>
</feature>
<feature type="active site" description="Nucleophile" evidence="1">
    <location>
        <position position="60"/>
    </location>
</feature>
<feature type="active site" description="Nucleophile" evidence="1">
    <location>
        <position position="63"/>
    </location>
</feature>
<feature type="active site" description="Nucleophile" evidence="1">
    <location>
        <position position="192"/>
    </location>
</feature>
<feature type="active site" description="Nucleophile" evidence="1">
    <location>
        <position position="195"/>
    </location>
</feature>
<feature type="site" description="Contributes to redox potential value" evidence="1">
    <location>
        <position position="61"/>
    </location>
</feature>
<feature type="site" description="Contributes to redox potential value" evidence="1">
    <location>
        <position position="62"/>
    </location>
</feature>
<feature type="site" description="Lowers pKa of C-terminal Cys of first active site" evidence="1">
    <location>
        <position position="122"/>
    </location>
</feature>
<feature type="site" description="Contributes to redox potential value" evidence="1">
    <location>
        <position position="193"/>
    </location>
</feature>
<feature type="site" description="Contributes to redox potential value" evidence="1">
    <location>
        <position position="194"/>
    </location>
</feature>
<feature type="site" description="Lowers pKa of C-terminal Cys of second active site" evidence="1">
    <location>
        <position position="255"/>
    </location>
</feature>
<feature type="glycosylation site" description="N-linked (GlcNAc...) asparagine" evidence="2">
    <location>
        <position position="168"/>
    </location>
</feature>
<feature type="disulfide bond" description="Redox-active" evidence="3">
    <location>
        <begin position="60"/>
        <end position="63"/>
    </location>
</feature>
<feature type="disulfide bond" description="Redox-active" evidence="3">
    <location>
        <begin position="192"/>
        <end position="195"/>
    </location>
</feature>
<name>PDI23_ARATH</name>
<protein>
    <recommendedName>
        <fullName>Protein disulfide-isomerase 2-3</fullName>
        <shortName>AtPDIL2-3</shortName>
        <ecNumber>5.3.4.1</ecNumber>
    </recommendedName>
    <alternativeName>
        <fullName>Protein disulfide-isomerase 5-2</fullName>
        <shortName>AtPDIL5-2</shortName>
    </alternativeName>
    <alternativeName>
        <fullName>Protein disulfide-isomerase 9</fullName>
        <shortName>PDI9</shortName>
    </alternativeName>
</protein>
<organism>
    <name type="scientific">Arabidopsis thaliana</name>
    <name type="common">Mouse-ear cress</name>
    <dbReference type="NCBI Taxonomy" id="3702"/>
    <lineage>
        <taxon>Eukaryota</taxon>
        <taxon>Viridiplantae</taxon>
        <taxon>Streptophyta</taxon>
        <taxon>Embryophyta</taxon>
        <taxon>Tracheophyta</taxon>
        <taxon>Spermatophyta</taxon>
        <taxon>Magnoliopsida</taxon>
        <taxon>eudicotyledons</taxon>
        <taxon>Gunneridae</taxon>
        <taxon>Pentapetalae</taxon>
        <taxon>rosids</taxon>
        <taxon>malvids</taxon>
        <taxon>Brassicales</taxon>
        <taxon>Brassicaceae</taxon>
        <taxon>Camelineae</taxon>
        <taxon>Arabidopsis</taxon>
    </lineage>
</organism>
<dbReference type="EC" id="5.3.4.1"/>
<dbReference type="EMBL" id="AC003033">
    <property type="protein sequence ID" value="AAB91984.1"/>
    <property type="molecule type" value="Genomic_DNA"/>
</dbReference>
<dbReference type="EMBL" id="CP002685">
    <property type="protein sequence ID" value="AEC08762.1"/>
    <property type="molecule type" value="Genomic_DNA"/>
</dbReference>
<dbReference type="EMBL" id="AY054270">
    <property type="protein sequence ID" value="AAL06929.1"/>
    <property type="molecule type" value="mRNA"/>
</dbReference>
<dbReference type="EMBL" id="AY072321">
    <property type="protein sequence ID" value="AAL61928.1"/>
    <property type="molecule type" value="mRNA"/>
</dbReference>
<dbReference type="EMBL" id="AY128728">
    <property type="protein sequence ID" value="AAM91128.1"/>
    <property type="molecule type" value="mRNA"/>
</dbReference>
<dbReference type="PIR" id="T01115">
    <property type="entry name" value="T01115"/>
</dbReference>
<dbReference type="RefSeq" id="NP_180851.1">
    <property type="nucleotide sequence ID" value="NM_128852.5"/>
</dbReference>
<dbReference type="SMR" id="O48773"/>
<dbReference type="FunCoup" id="O48773">
    <property type="interactions" value="3335"/>
</dbReference>
<dbReference type="STRING" id="3702.O48773"/>
<dbReference type="GlyCosmos" id="O48773">
    <property type="glycosylation" value="1 site, No reported glycans"/>
</dbReference>
<dbReference type="GlyGen" id="O48773">
    <property type="glycosylation" value="1 site"/>
</dbReference>
<dbReference type="SwissPalm" id="O48773"/>
<dbReference type="PaxDb" id="3702-AT2G32920.1"/>
<dbReference type="ProteomicsDB" id="236850"/>
<dbReference type="EnsemblPlants" id="AT2G32920.1">
    <property type="protein sequence ID" value="AT2G32920.1"/>
    <property type="gene ID" value="AT2G32920"/>
</dbReference>
<dbReference type="GeneID" id="817854"/>
<dbReference type="Gramene" id="AT2G32920.1">
    <property type="protein sequence ID" value="AT2G32920.1"/>
    <property type="gene ID" value="AT2G32920"/>
</dbReference>
<dbReference type="KEGG" id="ath:AT2G32920"/>
<dbReference type="Araport" id="AT2G32920"/>
<dbReference type="TAIR" id="AT2G32920">
    <property type="gene designation" value="PDIL2-3"/>
</dbReference>
<dbReference type="eggNOG" id="KOG0191">
    <property type="taxonomic scope" value="Eukaryota"/>
</dbReference>
<dbReference type="HOGENOM" id="CLU_030311_1_0_1"/>
<dbReference type="InParanoid" id="O48773"/>
<dbReference type="OMA" id="AIWVVQF"/>
<dbReference type="OrthoDB" id="10264505at2759"/>
<dbReference type="PhylomeDB" id="O48773"/>
<dbReference type="PRO" id="PR:O48773"/>
<dbReference type="Proteomes" id="UP000006548">
    <property type="component" value="Chromosome 2"/>
</dbReference>
<dbReference type="ExpressionAtlas" id="O48773">
    <property type="expression patterns" value="baseline and differential"/>
</dbReference>
<dbReference type="GO" id="GO:0005783">
    <property type="term" value="C:endoplasmic reticulum"/>
    <property type="evidence" value="ECO:0007005"/>
    <property type="project" value="TAIR"/>
</dbReference>
<dbReference type="GO" id="GO:0005788">
    <property type="term" value="C:endoplasmic reticulum lumen"/>
    <property type="evidence" value="ECO:0007669"/>
    <property type="project" value="UniProtKB-SubCell"/>
</dbReference>
<dbReference type="GO" id="GO:0005794">
    <property type="term" value="C:Golgi apparatus"/>
    <property type="evidence" value="ECO:0007005"/>
    <property type="project" value="TAIR"/>
</dbReference>
<dbReference type="GO" id="GO:0000325">
    <property type="term" value="C:plant-type vacuole"/>
    <property type="evidence" value="ECO:0007005"/>
    <property type="project" value="TAIR"/>
</dbReference>
<dbReference type="GO" id="GO:0003756">
    <property type="term" value="F:protein disulfide isomerase activity"/>
    <property type="evidence" value="ECO:0000250"/>
    <property type="project" value="TAIR"/>
</dbReference>
<dbReference type="GO" id="GO:0034976">
    <property type="term" value="P:response to endoplasmic reticulum stress"/>
    <property type="evidence" value="ECO:0000270"/>
    <property type="project" value="TAIR"/>
</dbReference>
<dbReference type="CDD" id="cd02983">
    <property type="entry name" value="P5_C"/>
    <property type="match status" value="1"/>
</dbReference>
<dbReference type="CDD" id="cd03001">
    <property type="entry name" value="PDI_a_P5"/>
    <property type="match status" value="2"/>
</dbReference>
<dbReference type="FunFam" id="3.40.30.10:FF:000050">
    <property type="entry name" value="protein disulfide-isomerase A6 isoform X1"/>
    <property type="match status" value="1"/>
</dbReference>
<dbReference type="Gene3D" id="3.40.30.10">
    <property type="entry name" value="Glutaredoxin"/>
    <property type="match status" value="3"/>
</dbReference>
<dbReference type="InterPro" id="IPR005788">
    <property type="entry name" value="PDI_thioredoxin-like_dom"/>
</dbReference>
<dbReference type="InterPro" id="IPR036249">
    <property type="entry name" value="Thioredoxin-like_sf"/>
</dbReference>
<dbReference type="InterPro" id="IPR017937">
    <property type="entry name" value="Thioredoxin_CS"/>
</dbReference>
<dbReference type="InterPro" id="IPR013766">
    <property type="entry name" value="Thioredoxin_domain"/>
</dbReference>
<dbReference type="NCBIfam" id="TIGR01126">
    <property type="entry name" value="pdi_dom"/>
    <property type="match status" value="2"/>
</dbReference>
<dbReference type="PANTHER" id="PTHR45815">
    <property type="entry name" value="PROTEIN DISULFIDE-ISOMERASE A6"/>
    <property type="match status" value="1"/>
</dbReference>
<dbReference type="PANTHER" id="PTHR45815:SF3">
    <property type="entry name" value="PROTEIN DISULFIDE-ISOMERASE A6"/>
    <property type="match status" value="1"/>
</dbReference>
<dbReference type="Pfam" id="PF24541">
    <property type="entry name" value="Thioredox_PDIA6_C"/>
    <property type="match status" value="1"/>
</dbReference>
<dbReference type="Pfam" id="PF00085">
    <property type="entry name" value="Thioredoxin"/>
    <property type="match status" value="2"/>
</dbReference>
<dbReference type="PRINTS" id="PR00421">
    <property type="entry name" value="THIOREDOXIN"/>
</dbReference>
<dbReference type="SUPFAM" id="SSF52833">
    <property type="entry name" value="Thioredoxin-like"/>
    <property type="match status" value="3"/>
</dbReference>
<dbReference type="PROSITE" id="PS00014">
    <property type="entry name" value="ER_TARGET"/>
    <property type="match status" value="1"/>
</dbReference>
<dbReference type="PROSITE" id="PS00194">
    <property type="entry name" value="THIOREDOXIN_1"/>
    <property type="match status" value="2"/>
</dbReference>
<dbReference type="PROSITE" id="PS51352">
    <property type="entry name" value="THIOREDOXIN_2"/>
    <property type="match status" value="2"/>
</dbReference>
<accession>O48773</accession>
<keyword id="KW-1015">Disulfide bond</keyword>
<keyword id="KW-0256">Endoplasmic reticulum</keyword>
<keyword id="KW-0325">Glycoprotein</keyword>
<keyword id="KW-0413">Isomerase</keyword>
<keyword id="KW-0676">Redox-active center</keyword>
<keyword id="KW-1185">Reference proteome</keyword>
<keyword id="KW-0677">Repeat</keyword>
<keyword id="KW-0732">Signal</keyword>
<proteinExistence type="evidence at transcript level"/>
<sequence>MYKSPLTLLTLLTICFGFFDLSSALYGSSSPVVQLTASNFKSKVLNSNGVVLVEFFAPWCGHCKALTPTWEKVANILKGVATVAAIDADAHQSAAQDYGIKGFPTIKVFVPGKAPIDYQGARDAKSIANFAYKQIKGLLSDRLEGKSKPTGGGSKEKKSEPSASVELNASNFDDLVIESNELWIVEFFAPWCGHCKKLAPEWKRAAKNLQGKVKLGHVNCDVEQSIMSRFKVQGFPTILVFGPDKSSPYPYEGARSASAIESFASELVESSAGPVEVTELTGPDVMEKKCGSAAICFISFLPDILDSKAEGRNKYLEMLLSVAEKFKKQPYSFMWVAAVTQMDLEKRVNVGGYGYPAMVAMNVKKGVYAPLKSAFELQHLLEFVKDAGTGGKGNVPMNGTPEIVKTKEWDGKDGELIEEDEFSLDELMGGDDAVGSKDEL</sequence>
<evidence type="ECO:0000250" key="1"/>
<evidence type="ECO:0000255" key="2"/>
<evidence type="ECO:0000255" key="3">
    <source>
        <dbReference type="PROSITE-ProRule" id="PRU00691"/>
    </source>
</evidence>
<evidence type="ECO:0000255" key="4">
    <source>
        <dbReference type="PROSITE-ProRule" id="PRU10138"/>
    </source>
</evidence>
<evidence type="ECO:0000256" key="5">
    <source>
        <dbReference type="SAM" id="MobiDB-lite"/>
    </source>
</evidence>
<evidence type="ECO:0000269" key="6">
    <source>
    </source>
</evidence>
<evidence type="ECO:0000305" key="7"/>
<gene>
    <name type="primary">PDIL2-3</name>
    <name type="synonym">PDI9</name>
    <name type="synonym">PDIL5-2</name>
    <name type="ordered locus">At2g32920</name>
    <name type="ORF">T21L14.14</name>
</gene>